<keyword id="KW-0665">Pyrimidine biosynthesis</keyword>
<keyword id="KW-0808">Transferase</keyword>
<gene>
    <name evidence="1" type="primary">pyrB</name>
    <name type="ordered locus">Acid_5512</name>
</gene>
<organism>
    <name type="scientific">Solibacter usitatus (strain Ellin6076)</name>
    <dbReference type="NCBI Taxonomy" id="234267"/>
    <lineage>
        <taxon>Bacteria</taxon>
        <taxon>Pseudomonadati</taxon>
        <taxon>Acidobacteriota</taxon>
        <taxon>Terriglobia</taxon>
        <taxon>Bryobacterales</taxon>
        <taxon>Solibacteraceae</taxon>
        <taxon>Candidatus Solibacter</taxon>
    </lineage>
</organism>
<reference key="1">
    <citation type="journal article" date="2009" name="Appl. Environ. Microbiol.">
        <title>Three genomes from the phylum Acidobacteria provide insight into the lifestyles of these microorganisms in soils.</title>
        <authorList>
            <person name="Ward N.L."/>
            <person name="Challacombe J.F."/>
            <person name="Janssen P.H."/>
            <person name="Henrissat B."/>
            <person name="Coutinho P.M."/>
            <person name="Wu M."/>
            <person name="Xie G."/>
            <person name="Haft D.H."/>
            <person name="Sait M."/>
            <person name="Badger J."/>
            <person name="Barabote R.D."/>
            <person name="Bradley B."/>
            <person name="Brettin T.S."/>
            <person name="Brinkac L.M."/>
            <person name="Bruce D."/>
            <person name="Creasy T."/>
            <person name="Daugherty S.C."/>
            <person name="Davidsen T.M."/>
            <person name="DeBoy R.T."/>
            <person name="Detter J.C."/>
            <person name="Dodson R.J."/>
            <person name="Durkin A.S."/>
            <person name="Ganapathy A."/>
            <person name="Gwinn-Giglio M."/>
            <person name="Han C.S."/>
            <person name="Khouri H."/>
            <person name="Kiss H."/>
            <person name="Kothari S.P."/>
            <person name="Madupu R."/>
            <person name="Nelson K.E."/>
            <person name="Nelson W.C."/>
            <person name="Paulsen I."/>
            <person name="Penn K."/>
            <person name="Ren Q."/>
            <person name="Rosovitz M.J."/>
            <person name="Selengut J.D."/>
            <person name="Shrivastava S."/>
            <person name="Sullivan S.A."/>
            <person name="Tapia R."/>
            <person name="Thompson L.S."/>
            <person name="Watkins K.L."/>
            <person name="Yang Q."/>
            <person name="Yu C."/>
            <person name="Zafar N."/>
            <person name="Zhou L."/>
            <person name="Kuske C.R."/>
        </authorList>
    </citation>
    <scope>NUCLEOTIDE SEQUENCE [LARGE SCALE GENOMIC DNA]</scope>
    <source>
        <strain>Ellin6076</strain>
    </source>
</reference>
<dbReference type="EC" id="2.1.3.2" evidence="1"/>
<dbReference type="EMBL" id="CP000473">
    <property type="protein sequence ID" value="ABJ86459.1"/>
    <property type="molecule type" value="Genomic_DNA"/>
</dbReference>
<dbReference type="SMR" id="Q01V56"/>
<dbReference type="FunCoup" id="Q01V56">
    <property type="interactions" value="586"/>
</dbReference>
<dbReference type="STRING" id="234267.Acid_5512"/>
<dbReference type="KEGG" id="sus:Acid_5512"/>
<dbReference type="eggNOG" id="COG0540">
    <property type="taxonomic scope" value="Bacteria"/>
</dbReference>
<dbReference type="HOGENOM" id="CLU_043846_2_0_0"/>
<dbReference type="InParanoid" id="Q01V56"/>
<dbReference type="OrthoDB" id="9774690at2"/>
<dbReference type="UniPathway" id="UPA00070">
    <property type="reaction ID" value="UER00116"/>
</dbReference>
<dbReference type="GO" id="GO:0005829">
    <property type="term" value="C:cytosol"/>
    <property type="evidence" value="ECO:0007669"/>
    <property type="project" value="TreeGrafter"/>
</dbReference>
<dbReference type="GO" id="GO:0016597">
    <property type="term" value="F:amino acid binding"/>
    <property type="evidence" value="ECO:0007669"/>
    <property type="project" value="InterPro"/>
</dbReference>
<dbReference type="GO" id="GO:0004070">
    <property type="term" value="F:aspartate carbamoyltransferase activity"/>
    <property type="evidence" value="ECO:0007669"/>
    <property type="project" value="UniProtKB-UniRule"/>
</dbReference>
<dbReference type="GO" id="GO:0006207">
    <property type="term" value="P:'de novo' pyrimidine nucleobase biosynthetic process"/>
    <property type="evidence" value="ECO:0007669"/>
    <property type="project" value="InterPro"/>
</dbReference>
<dbReference type="GO" id="GO:0044205">
    <property type="term" value="P:'de novo' UMP biosynthetic process"/>
    <property type="evidence" value="ECO:0007669"/>
    <property type="project" value="UniProtKB-UniRule"/>
</dbReference>
<dbReference type="GO" id="GO:0006520">
    <property type="term" value="P:amino acid metabolic process"/>
    <property type="evidence" value="ECO:0007669"/>
    <property type="project" value="InterPro"/>
</dbReference>
<dbReference type="Gene3D" id="3.40.50.1370">
    <property type="entry name" value="Aspartate/ornithine carbamoyltransferase"/>
    <property type="match status" value="2"/>
</dbReference>
<dbReference type="HAMAP" id="MF_00001">
    <property type="entry name" value="Asp_carb_tr"/>
    <property type="match status" value="1"/>
</dbReference>
<dbReference type="InterPro" id="IPR006132">
    <property type="entry name" value="Asp/Orn_carbamoyltranf_P-bd"/>
</dbReference>
<dbReference type="InterPro" id="IPR006130">
    <property type="entry name" value="Asp/Orn_carbamoylTrfase"/>
</dbReference>
<dbReference type="InterPro" id="IPR036901">
    <property type="entry name" value="Asp/Orn_carbamoylTrfase_sf"/>
</dbReference>
<dbReference type="InterPro" id="IPR002082">
    <property type="entry name" value="Asp_carbamoyltransf"/>
</dbReference>
<dbReference type="InterPro" id="IPR006131">
    <property type="entry name" value="Asp_carbamoyltransf_Asp/Orn-bd"/>
</dbReference>
<dbReference type="NCBIfam" id="TIGR00670">
    <property type="entry name" value="asp_carb_tr"/>
    <property type="match status" value="1"/>
</dbReference>
<dbReference type="NCBIfam" id="NF002032">
    <property type="entry name" value="PRK00856.1"/>
    <property type="match status" value="1"/>
</dbReference>
<dbReference type="PANTHER" id="PTHR45753:SF6">
    <property type="entry name" value="ASPARTATE CARBAMOYLTRANSFERASE"/>
    <property type="match status" value="1"/>
</dbReference>
<dbReference type="PANTHER" id="PTHR45753">
    <property type="entry name" value="ORNITHINE CARBAMOYLTRANSFERASE, MITOCHONDRIAL"/>
    <property type="match status" value="1"/>
</dbReference>
<dbReference type="Pfam" id="PF00185">
    <property type="entry name" value="OTCace"/>
    <property type="match status" value="1"/>
</dbReference>
<dbReference type="Pfam" id="PF02729">
    <property type="entry name" value="OTCace_N"/>
    <property type="match status" value="1"/>
</dbReference>
<dbReference type="PRINTS" id="PR00100">
    <property type="entry name" value="AOTCASE"/>
</dbReference>
<dbReference type="PRINTS" id="PR00101">
    <property type="entry name" value="ATCASE"/>
</dbReference>
<dbReference type="SUPFAM" id="SSF53671">
    <property type="entry name" value="Aspartate/ornithine carbamoyltransferase"/>
    <property type="match status" value="1"/>
</dbReference>
<dbReference type="PROSITE" id="PS00097">
    <property type="entry name" value="CARBAMOYLTRANSFERASE"/>
    <property type="match status" value="1"/>
</dbReference>
<protein>
    <recommendedName>
        <fullName evidence="1">Aspartate carbamoyltransferase catalytic subunit</fullName>
        <ecNumber evidence="1">2.1.3.2</ecNumber>
    </recommendedName>
    <alternativeName>
        <fullName evidence="1">Aspartate transcarbamylase</fullName>
        <shortName evidence="1">ATCase</shortName>
    </alternativeName>
</protein>
<sequence>MPAGLLGIEELGRAEIEAILSRAKDFQPLQSQSLKKLDTLRGKMIVNLFFEASTRTRTSFEIAAKRLGADAISITASGSSVSKGESLVDTLNTLGAMRPDAIVMRHSASGAPHFLARYLPTPIINAGDGTHEHPTQALLDARTILDRCGQLDGLKVAIIGDIAHSRVARSNVHLLSKFGAKIVLCGPASLLPVELAQLAPGVVLTTDIRDAIKDADVIMMLRVQLERQHEASFPASEYFRFYGLQLAHLDLAKPEAIVMHPGPINRGRELSSEVADFQRSVILNQVENGIAVRMAVLEKVIG</sequence>
<comment type="function">
    <text evidence="1">Catalyzes the condensation of carbamoyl phosphate and aspartate to form carbamoyl aspartate and inorganic phosphate, the committed step in the de novo pyrimidine nucleotide biosynthesis pathway.</text>
</comment>
<comment type="catalytic activity">
    <reaction evidence="1">
        <text>carbamoyl phosphate + L-aspartate = N-carbamoyl-L-aspartate + phosphate + H(+)</text>
        <dbReference type="Rhea" id="RHEA:20013"/>
        <dbReference type="ChEBI" id="CHEBI:15378"/>
        <dbReference type="ChEBI" id="CHEBI:29991"/>
        <dbReference type="ChEBI" id="CHEBI:32814"/>
        <dbReference type="ChEBI" id="CHEBI:43474"/>
        <dbReference type="ChEBI" id="CHEBI:58228"/>
        <dbReference type="EC" id="2.1.3.2"/>
    </reaction>
</comment>
<comment type="pathway">
    <text evidence="1">Pyrimidine metabolism; UMP biosynthesis via de novo pathway; (S)-dihydroorotate from bicarbonate: step 2/3.</text>
</comment>
<comment type="subunit">
    <text evidence="1">Heterododecamer (2C3:3R2) of six catalytic PyrB chains organized as two trimers (C3), and six regulatory PyrI chains organized as three dimers (R2).</text>
</comment>
<comment type="similarity">
    <text evidence="1">Belongs to the aspartate/ornithine carbamoyltransferase superfamily. ATCase family.</text>
</comment>
<evidence type="ECO:0000255" key="1">
    <source>
        <dbReference type="HAMAP-Rule" id="MF_00001"/>
    </source>
</evidence>
<name>PYRB_SOLUE</name>
<feature type="chain" id="PRO_0000321159" description="Aspartate carbamoyltransferase catalytic subunit">
    <location>
        <begin position="1"/>
        <end position="302"/>
    </location>
</feature>
<feature type="binding site" evidence="1">
    <location>
        <position position="55"/>
    </location>
    <ligand>
        <name>carbamoyl phosphate</name>
        <dbReference type="ChEBI" id="CHEBI:58228"/>
    </ligand>
</feature>
<feature type="binding site" evidence="1">
    <location>
        <position position="56"/>
    </location>
    <ligand>
        <name>carbamoyl phosphate</name>
        <dbReference type="ChEBI" id="CHEBI:58228"/>
    </ligand>
</feature>
<feature type="binding site" evidence="1">
    <location>
        <position position="83"/>
    </location>
    <ligand>
        <name>L-aspartate</name>
        <dbReference type="ChEBI" id="CHEBI:29991"/>
    </ligand>
</feature>
<feature type="binding site" evidence="1">
    <location>
        <position position="105"/>
    </location>
    <ligand>
        <name>carbamoyl phosphate</name>
        <dbReference type="ChEBI" id="CHEBI:58228"/>
    </ligand>
</feature>
<feature type="binding site" evidence="1">
    <location>
        <position position="133"/>
    </location>
    <ligand>
        <name>carbamoyl phosphate</name>
        <dbReference type="ChEBI" id="CHEBI:58228"/>
    </ligand>
</feature>
<feature type="binding site" evidence="1">
    <location>
        <position position="136"/>
    </location>
    <ligand>
        <name>carbamoyl phosphate</name>
        <dbReference type="ChEBI" id="CHEBI:58228"/>
    </ligand>
</feature>
<feature type="binding site" evidence="1">
    <location>
        <position position="166"/>
    </location>
    <ligand>
        <name>L-aspartate</name>
        <dbReference type="ChEBI" id="CHEBI:29991"/>
    </ligand>
</feature>
<feature type="binding site" evidence="1">
    <location>
        <position position="222"/>
    </location>
    <ligand>
        <name>L-aspartate</name>
        <dbReference type="ChEBI" id="CHEBI:29991"/>
    </ligand>
</feature>
<feature type="binding site" evidence="1">
    <location>
        <position position="262"/>
    </location>
    <ligand>
        <name>carbamoyl phosphate</name>
        <dbReference type="ChEBI" id="CHEBI:58228"/>
    </ligand>
</feature>
<feature type="binding site" evidence="1">
    <location>
        <position position="263"/>
    </location>
    <ligand>
        <name>carbamoyl phosphate</name>
        <dbReference type="ChEBI" id="CHEBI:58228"/>
    </ligand>
</feature>
<accession>Q01V56</accession>
<proteinExistence type="inferred from homology"/>